<dbReference type="EMBL" id="AE009950">
    <property type="protein sequence ID" value="AAL80605.1"/>
    <property type="molecule type" value="Genomic_DNA"/>
</dbReference>
<dbReference type="RefSeq" id="WP_011011598.1">
    <property type="nucleotide sequence ID" value="NZ_CP023154.1"/>
</dbReference>
<dbReference type="PDB" id="2D74">
    <property type="method" value="X-ray"/>
    <property type="resolution" value="2.80 A"/>
    <property type="chains" value="B=1-140"/>
</dbReference>
<dbReference type="PDB" id="2DCU">
    <property type="method" value="X-ray"/>
    <property type="resolution" value="3.40 A"/>
    <property type="chains" value="B=1-140"/>
</dbReference>
<dbReference type="PDBsum" id="2D74"/>
<dbReference type="PDBsum" id="2DCU"/>
<dbReference type="SMR" id="Q8U3I5"/>
<dbReference type="DIP" id="DIP-54411N"/>
<dbReference type="IntAct" id="Q8U3I5">
    <property type="interactions" value="2"/>
</dbReference>
<dbReference type="STRING" id="186497.PF0481"/>
<dbReference type="PaxDb" id="186497-PF0481"/>
<dbReference type="KEGG" id="pfu:PF0481"/>
<dbReference type="PATRIC" id="fig|186497.12.peg.504"/>
<dbReference type="eggNOG" id="arCOG01640">
    <property type="taxonomic scope" value="Archaea"/>
</dbReference>
<dbReference type="HOGENOM" id="CLU_026663_3_1_2"/>
<dbReference type="OrthoDB" id="38099at2157"/>
<dbReference type="PhylomeDB" id="Q8U3I5"/>
<dbReference type="EvolutionaryTrace" id="Q8U3I5"/>
<dbReference type="Proteomes" id="UP000001013">
    <property type="component" value="Chromosome"/>
</dbReference>
<dbReference type="GO" id="GO:0003743">
    <property type="term" value="F:translation initiation factor activity"/>
    <property type="evidence" value="ECO:0007669"/>
    <property type="project" value="UniProtKB-UniRule"/>
</dbReference>
<dbReference type="FunFam" id="3.30.30.170:FF:000001">
    <property type="entry name" value="Eukaryotic translation initiation factor 2 subunit"/>
    <property type="match status" value="1"/>
</dbReference>
<dbReference type="Gene3D" id="3.30.30.170">
    <property type="match status" value="1"/>
</dbReference>
<dbReference type="HAMAP" id="MF_00232">
    <property type="entry name" value="eIF_2_beta"/>
    <property type="match status" value="1"/>
</dbReference>
<dbReference type="InterPro" id="IPR045196">
    <property type="entry name" value="IF2/IF5"/>
</dbReference>
<dbReference type="InterPro" id="IPR004458">
    <property type="entry name" value="TIF2_bsu_arc"/>
</dbReference>
<dbReference type="InterPro" id="IPR002735">
    <property type="entry name" value="Transl_init_fac_IF2/IF5_dom"/>
</dbReference>
<dbReference type="InterPro" id="IPR016189">
    <property type="entry name" value="Transl_init_fac_IF2/IF5_N"/>
</dbReference>
<dbReference type="InterPro" id="IPR016190">
    <property type="entry name" value="Transl_init_fac_IF2/IF5_Zn-bd"/>
</dbReference>
<dbReference type="NCBIfam" id="TIGR00311">
    <property type="entry name" value="aIF-2beta"/>
    <property type="match status" value="1"/>
</dbReference>
<dbReference type="NCBIfam" id="NF003067">
    <property type="entry name" value="PRK03988.1"/>
    <property type="match status" value="1"/>
</dbReference>
<dbReference type="PANTHER" id="PTHR23001">
    <property type="entry name" value="EUKARYOTIC TRANSLATION INITIATION FACTOR"/>
    <property type="match status" value="1"/>
</dbReference>
<dbReference type="PANTHER" id="PTHR23001:SF3">
    <property type="entry name" value="EUKARYOTIC TRANSLATION INITIATION FACTOR 2 SUBUNIT 2"/>
    <property type="match status" value="1"/>
</dbReference>
<dbReference type="Pfam" id="PF01873">
    <property type="entry name" value="eIF-5_eIF-2B"/>
    <property type="match status" value="1"/>
</dbReference>
<dbReference type="SMART" id="SM00653">
    <property type="entry name" value="eIF2B_5"/>
    <property type="match status" value="1"/>
</dbReference>
<dbReference type="SUPFAM" id="SSF100966">
    <property type="entry name" value="Translation initiation factor 2 beta, aIF2beta, N-terminal domain"/>
    <property type="match status" value="1"/>
</dbReference>
<dbReference type="SUPFAM" id="SSF75689">
    <property type="entry name" value="Zinc-binding domain of translation initiation factor 2 beta"/>
    <property type="match status" value="1"/>
</dbReference>
<name>IF2B_PYRFU</name>
<reference key="1">
    <citation type="journal article" date="1999" name="Genetics">
        <title>Divergence of the hyperthermophilic archaea Pyrococcus furiosus and P. horikoshii inferred from complete genomic sequences.</title>
        <authorList>
            <person name="Maeder D.L."/>
            <person name="Weiss R.B."/>
            <person name="Dunn D.M."/>
            <person name="Cherry J.L."/>
            <person name="Gonzalez J.M."/>
            <person name="DiRuggiero J."/>
            <person name="Robb F.T."/>
        </authorList>
    </citation>
    <scope>NUCLEOTIDE SEQUENCE [LARGE SCALE GENOMIC DNA]</scope>
    <source>
        <strain>ATCC 43587 / DSM 3638 / JCM 8422 / Vc1</strain>
    </source>
</reference>
<proteinExistence type="evidence at protein level"/>
<feature type="chain" id="PRO_0000137430" description="Translation initiation factor 2 subunit beta">
    <location>
        <begin position="1"/>
        <end position="140"/>
    </location>
</feature>
<feature type="helix" evidence="2">
    <location>
        <begin position="8"/>
        <end position="13"/>
    </location>
</feature>
<feature type="turn" evidence="2">
    <location>
        <begin position="14"/>
        <end position="16"/>
    </location>
</feature>
<feature type="strand" evidence="2">
    <location>
        <begin position="17"/>
        <end position="19"/>
    </location>
</feature>
<feature type="helix" evidence="2">
    <location>
        <begin position="21"/>
        <end position="24"/>
    </location>
</feature>
<feature type="strand" evidence="2">
    <location>
        <begin position="25"/>
        <end position="27"/>
    </location>
</feature>
<feature type="strand" evidence="2">
    <location>
        <begin position="37"/>
        <end position="40"/>
    </location>
</feature>
<feature type="strand" evidence="2">
    <location>
        <begin position="43"/>
        <end position="47"/>
    </location>
</feature>
<feature type="helix" evidence="2">
    <location>
        <begin position="49"/>
        <end position="56"/>
    </location>
</feature>
<feature type="helix" evidence="2">
    <location>
        <begin position="61"/>
        <end position="70"/>
    </location>
</feature>
<feature type="strand" evidence="2">
    <location>
        <begin position="75"/>
        <end position="78"/>
    </location>
</feature>
<feature type="strand" evidence="2">
    <location>
        <begin position="81"/>
        <end position="86"/>
    </location>
</feature>
<feature type="helix" evidence="2">
    <location>
        <begin position="90"/>
        <end position="104"/>
    </location>
</feature>
<feature type="strand" evidence="2">
    <location>
        <begin position="108"/>
        <end position="110"/>
    </location>
</feature>
<feature type="strand" evidence="2">
    <location>
        <begin position="119"/>
        <end position="124"/>
    </location>
</feature>
<feature type="strand" evidence="2">
    <location>
        <begin position="129"/>
        <end position="131"/>
    </location>
</feature>
<protein>
    <recommendedName>
        <fullName evidence="1">Translation initiation factor 2 subunit beta</fullName>
    </recommendedName>
    <alternativeName>
        <fullName evidence="1">aIF2-beta</fullName>
    </alternativeName>
    <alternativeName>
        <fullName evidence="1">eIF-2-beta</fullName>
    </alternativeName>
</protein>
<gene>
    <name evidence="1" type="primary">eif2b</name>
    <name type="ordered locus">PF0481</name>
</gene>
<keyword id="KW-0002">3D-structure</keyword>
<keyword id="KW-0396">Initiation factor</keyword>
<keyword id="KW-0648">Protein biosynthesis</keyword>
<keyword id="KW-1185">Reference proteome</keyword>
<comment type="function">
    <text evidence="1">eIF-2 functions in the early steps of protein synthesis by forming a ternary complex with GTP and initiator tRNA.</text>
</comment>
<comment type="subunit">
    <text evidence="1">Heterotrimer composed of an alpha, a beta and a gamma chain.</text>
</comment>
<comment type="interaction">
    <interactant intactId="EBI-2505077">
        <id>Q8U3I5</id>
    </interactant>
    <interactant intactId="EBI-2504997">
        <id>Q8U082</id>
        <label>eif2g</label>
    </interactant>
    <organismsDiffer>false</organismsDiffer>
    <experiments>2</experiments>
</comment>
<comment type="similarity">
    <text evidence="1">Belongs to the eIF-2-beta/eIF-5 family.</text>
</comment>
<sequence length="140" mass="16234">MEIDYYDYEKLLEKAYQELPENVKHHKSRFEVPGALVTIEGNKTIIENFKDIADALNRDPQHLLKFLLREIATAGTLEGRRVVLQGRFTPYLIANKLKKYIKEYVICPVCGSPDTKIIKRDRFHFLKCEACGAETPIQHL</sequence>
<accession>Q8U3I5</accession>
<evidence type="ECO:0000255" key="1">
    <source>
        <dbReference type="HAMAP-Rule" id="MF_00232"/>
    </source>
</evidence>
<evidence type="ECO:0007829" key="2">
    <source>
        <dbReference type="PDB" id="2D74"/>
    </source>
</evidence>
<organism>
    <name type="scientific">Pyrococcus furiosus (strain ATCC 43587 / DSM 3638 / JCM 8422 / Vc1)</name>
    <dbReference type="NCBI Taxonomy" id="186497"/>
    <lineage>
        <taxon>Archaea</taxon>
        <taxon>Methanobacteriati</taxon>
        <taxon>Methanobacteriota</taxon>
        <taxon>Thermococci</taxon>
        <taxon>Thermococcales</taxon>
        <taxon>Thermococcaceae</taxon>
        <taxon>Pyrococcus</taxon>
    </lineage>
</organism>